<dbReference type="EMBL" id="BA000012">
    <property type="protein sequence ID" value="BAB49933.1"/>
    <property type="molecule type" value="Genomic_DNA"/>
</dbReference>
<dbReference type="RefSeq" id="WP_010911280.1">
    <property type="nucleotide sequence ID" value="NC_002678.2"/>
</dbReference>
<dbReference type="SMR" id="Q98HD3"/>
<dbReference type="GeneID" id="66682308"/>
<dbReference type="KEGG" id="mlo:mlr2921"/>
<dbReference type="eggNOG" id="COG2063">
    <property type="taxonomic scope" value="Bacteria"/>
</dbReference>
<dbReference type="HOGENOM" id="CLU_069313_1_2_5"/>
<dbReference type="Proteomes" id="UP000000552">
    <property type="component" value="Chromosome"/>
</dbReference>
<dbReference type="GO" id="GO:0009427">
    <property type="term" value="C:bacterial-type flagellum basal body, distal rod, L ring"/>
    <property type="evidence" value="ECO:0007669"/>
    <property type="project" value="InterPro"/>
</dbReference>
<dbReference type="GO" id="GO:0009279">
    <property type="term" value="C:cell outer membrane"/>
    <property type="evidence" value="ECO:0007669"/>
    <property type="project" value="UniProtKB-SubCell"/>
</dbReference>
<dbReference type="GO" id="GO:0003774">
    <property type="term" value="F:cytoskeletal motor activity"/>
    <property type="evidence" value="ECO:0007669"/>
    <property type="project" value="InterPro"/>
</dbReference>
<dbReference type="GO" id="GO:0071973">
    <property type="term" value="P:bacterial-type flagellum-dependent cell motility"/>
    <property type="evidence" value="ECO:0007669"/>
    <property type="project" value="InterPro"/>
</dbReference>
<dbReference type="HAMAP" id="MF_00415">
    <property type="entry name" value="FlgH"/>
    <property type="match status" value="1"/>
</dbReference>
<dbReference type="InterPro" id="IPR000527">
    <property type="entry name" value="Flag_Lring"/>
</dbReference>
<dbReference type="NCBIfam" id="NF001305">
    <property type="entry name" value="PRK00249.1-5"/>
    <property type="match status" value="1"/>
</dbReference>
<dbReference type="PANTHER" id="PTHR34933">
    <property type="entry name" value="FLAGELLAR L-RING PROTEIN"/>
    <property type="match status" value="1"/>
</dbReference>
<dbReference type="PANTHER" id="PTHR34933:SF1">
    <property type="entry name" value="FLAGELLAR L-RING PROTEIN"/>
    <property type="match status" value="1"/>
</dbReference>
<dbReference type="Pfam" id="PF02107">
    <property type="entry name" value="FlgH"/>
    <property type="match status" value="1"/>
</dbReference>
<dbReference type="PRINTS" id="PR01008">
    <property type="entry name" value="FLGLRINGFLGH"/>
</dbReference>
<dbReference type="PROSITE" id="PS51257">
    <property type="entry name" value="PROKAR_LIPOPROTEIN"/>
    <property type="match status" value="1"/>
</dbReference>
<feature type="signal peptide" evidence="2">
    <location>
        <begin position="1"/>
        <end position="16"/>
    </location>
</feature>
<feature type="chain" id="PRO_0000009464" description="Flagellar L-ring protein">
    <location>
        <begin position="17"/>
        <end position="235"/>
    </location>
</feature>
<feature type="lipid moiety-binding region" description="N-palmitoyl cysteine" evidence="2">
    <location>
        <position position="17"/>
    </location>
</feature>
<feature type="lipid moiety-binding region" description="S-diacylglycerol cysteine" evidence="2">
    <location>
        <position position="17"/>
    </location>
</feature>
<reference key="1">
    <citation type="journal article" date="2000" name="DNA Res.">
        <title>Complete genome structure of the nitrogen-fixing symbiotic bacterium Mesorhizobium loti.</title>
        <authorList>
            <person name="Kaneko T."/>
            <person name="Nakamura Y."/>
            <person name="Sato S."/>
            <person name="Asamizu E."/>
            <person name="Kato T."/>
            <person name="Sasamoto S."/>
            <person name="Watanabe A."/>
            <person name="Idesawa K."/>
            <person name="Ishikawa A."/>
            <person name="Kawashima K."/>
            <person name="Kimura T."/>
            <person name="Kishida Y."/>
            <person name="Kiyokawa C."/>
            <person name="Kohara M."/>
            <person name="Matsumoto M."/>
            <person name="Matsuno A."/>
            <person name="Mochizuki Y."/>
            <person name="Nakayama S."/>
            <person name="Nakazaki N."/>
            <person name="Shimpo S."/>
            <person name="Sugimoto M."/>
            <person name="Takeuchi C."/>
            <person name="Yamada M."/>
            <person name="Tabata S."/>
        </authorList>
    </citation>
    <scope>NUCLEOTIDE SEQUENCE [LARGE SCALE GENOMIC DNA]</scope>
    <source>
        <strain>LMG 29417 / CECT 9101 / MAFF 303099</strain>
    </source>
</reference>
<accession>Q98HD3</accession>
<proteinExistence type="inferred from homology"/>
<keyword id="KW-0975">Bacterial flagellum</keyword>
<keyword id="KW-0998">Cell outer membrane</keyword>
<keyword id="KW-0449">Lipoprotein</keyword>
<keyword id="KW-0472">Membrane</keyword>
<keyword id="KW-0564">Palmitate</keyword>
<keyword id="KW-0732">Signal</keyword>
<gene>
    <name type="primary">flgH</name>
    <name type="ordered locus">mlr2921</name>
</gene>
<name>FLGH_RHILO</name>
<protein>
    <recommendedName>
        <fullName>Flagellar L-ring protein</fullName>
    </recommendedName>
    <alternativeName>
        <fullName>Basal body L-ring protein</fullName>
    </alternativeName>
</protein>
<sequence length="235" mass="25524">MIRRTLILCAVAALSGCGTNLREVGKEPSLSPVGSGIDGGNTSALYKYPEPPRAPVKKFSLWDDRQSRLFTDPRALSQGDILTVRIKINDRANFKNQNDRSRTANRKLGFDLSAQWDKWSTAGKGAGALNSATDTTADGEIKRSETLELNVAAIVTDVLPNGNLMITGSQEVRVNAELRVLTIAGIVRPADIGAENTIPYERIAEARISYGGRGRISEIQQPAYGQQVLDQVLPF</sequence>
<comment type="function">
    <text evidence="1">Assembles around the rod to form the L-ring and probably protects the motor/basal body from shearing forces during rotation.</text>
</comment>
<comment type="subunit">
    <text evidence="1">The basal body constitutes a major portion of the flagellar organelle and consists of four rings (L,P,S, and M) mounted on a central rod.</text>
</comment>
<comment type="subcellular location">
    <subcellularLocation>
        <location evidence="1">Cell outer membrane</location>
        <topology evidence="1">Lipid-anchor</topology>
    </subcellularLocation>
    <subcellularLocation>
        <location evidence="1">Bacterial flagellum basal body</location>
    </subcellularLocation>
</comment>
<comment type="similarity">
    <text evidence="3">Belongs to the FlgH family.</text>
</comment>
<evidence type="ECO:0000250" key="1"/>
<evidence type="ECO:0000255" key="2"/>
<evidence type="ECO:0000305" key="3"/>
<organism>
    <name type="scientific">Mesorhizobium japonicum (strain LMG 29417 / CECT 9101 / MAFF 303099)</name>
    <name type="common">Mesorhizobium loti (strain MAFF 303099)</name>
    <dbReference type="NCBI Taxonomy" id="266835"/>
    <lineage>
        <taxon>Bacteria</taxon>
        <taxon>Pseudomonadati</taxon>
        <taxon>Pseudomonadota</taxon>
        <taxon>Alphaproteobacteria</taxon>
        <taxon>Hyphomicrobiales</taxon>
        <taxon>Phyllobacteriaceae</taxon>
        <taxon>Mesorhizobium</taxon>
    </lineage>
</organism>